<accession>Q1GNX8</accession>
<evidence type="ECO:0000255" key="1">
    <source>
        <dbReference type="HAMAP-Rule" id="MF_00382"/>
    </source>
</evidence>
<evidence type="ECO:0000305" key="2"/>
<sequence>MSRIKRGTTTRAKHKRILDQAKGYYGRRKNTIRIARQAVEKAGQYAYRDRKVKKRSFRALWIQRINAAVRAEGLTYSQFMHGVKLAGIELDRKVMADLAMNEGGVFTAIVAQAKAALPKAA</sequence>
<feature type="chain" id="PRO_1000049078" description="Large ribosomal subunit protein bL20">
    <location>
        <begin position="1"/>
        <end position="121"/>
    </location>
</feature>
<protein>
    <recommendedName>
        <fullName evidence="1">Large ribosomal subunit protein bL20</fullName>
    </recommendedName>
    <alternativeName>
        <fullName evidence="2">50S ribosomal protein L20</fullName>
    </alternativeName>
</protein>
<gene>
    <name evidence="1" type="primary">rplT</name>
    <name type="ordered locus">Sala_2939</name>
</gene>
<dbReference type="EMBL" id="CP000356">
    <property type="protein sequence ID" value="ABF54644.1"/>
    <property type="molecule type" value="Genomic_DNA"/>
</dbReference>
<dbReference type="RefSeq" id="WP_011543208.1">
    <property type="nucleotide sequence ID" value="NC_008048.1"/>
</dbReference>
<dbReference type="SMR" id="Q1GNX8"/>
<dbReference type="STRING" id="317655.Sala_2939"/>
<dbReference type="KEGG" id="sal:Sala_2939"/>
<dbReference type="eggNOG" id="COG0292">
    <property type="taxonomic scope" value="Bacteria"/>
</dbReference>
<dbReference type="HOGENOM" id="CLU_123265_0_1_5"/>
<dbReference type="OrthoDB" id="9808966at2"/>
<dbReference type="Proteomes" id="UP000006578">
    <property type="component" value="Chromosome"/>
</dbReference>
<dbReference type="GO" id="GO:1990904">
    <property type="term" value="C:ribonucleoprotein complex"/>
    <property type="evidence" value="ECO:0007669"/>
    <property type="project" value="UniProtKB-KW"/>
</dbReference>
<dbReference type="GO" id="GO:0005840">
    <property type="term" value="C:ribosome"/>
    <property type="evidence" value="ECO:0007669"/>
    <property type="project" value="UniProtKB-KW"/>
</dbReference>
<dbReference type="GO" id="GO:0019843">
    <property type="term" value="F:rRNA binding"/>
    <property type="evidence" value="ECO:0007669"/>
    <property type="project" value="UniProtKB-UniRule"/>
</dbReference>
<dbReference type="GO" id="GO:0003735">
    <property type="term" value="F:structural constituent of ribosome"/>
    <property type="evidence" value="ECO:0007669"/>
    <property type="project" value="InterPro"/>
</dbReference>
<dbReference type="GO" id="GO:0000027">
    <property type="term" value="P:ribosomal large subunit assembly"/>
    <property type="evidence" value="ECO:0007669"/>
    <property type="project" value="UniProtKB-UniRule"/>
</dbReference>
<dbReference type="GO" id="GO:0006412">
    <property type="term" value="P:translation"/>
    <property type="evidence" value="ECO:0007669"/>
    <property type="project" value="InterPro"/>
</dbReference>
<dbReference type="CDD" id="cd07026">
    <property type="entry name" value="Ribosomal_L20"/>
    <property type="match status" value="1"/>
</dbReference>
<dbReference type="FunFam" id="1.10.1900.20:FF:000001">
    <property type="entry name" value="50S ribosomal protein L20"/>
    <property type="match status" value="1"/>
</dbReference>
<dbReference type="Gene3D" id="6.10.160.10">
    <property type="match status" value="1"/>
</dbReference>
<dbReference type="Gene3D" id="1.10.1900.20">
    <property type="entry name" value="Ribosomal protein L20"/>
    <property type="match status" value="1"/>
</dbReference>
<dbReference type="HAMAP" id="MF_00382">
    <property type="entry name" value="Ribosomal_bL20"/>
    <property type="match status" value="1"/>
</dbReference>
<dbReference type="InterPro" id="IPR005813">
    <property type="entry name" value="Ribosomal_bL20"/>
</dbReference>
<dbReference type="InterPro" id="IPR049946">
    <property type="entry name" value="RIBOSOMAL_L20_CS"/>
</dbReference>
<dbReference type="InterPro" id="IPR035566">
    <property type="entry name" value="Ribosomal_protein_bL20_C"/>
</dbReference>
<dbReference type="NCBIfam" id="TIGR01032">
    <property type="entry name" value="rplT_bact"/>
    <property type="match status" value="1"/>
</dbReference>
<dbReference type="PANTHER" id="PTHR10986">
    <property type="entry name" value="39S RIBOSOMAL PROTEIN L20"/>
    <property type="match status" value="1"/>
</dbReference>
<dbReference type="Pfam" id="PF00453">
    <property type="entry name" value="Ribosomal_L20"/>
    <property type="match status" value="1"/>
</dbReference>
<dbReference type="PRINTS" id="PR00062">
    <property type="entry name" value="RIBOSOMALL20"/>
</dbReference>
<dbReference type="SUPFAM" id="SSF74731">
    <property type="entry name" value="Ribosomal protein L20"/>
    <property type="match status" value="1"/>
</dbReference>
<dbReference type="PROSITE" id="PS00937">
    <property type="entry name" value="RIBOSOMAL_L20"/>
    <property type="match status" value="1"/>
</dbReference>
<organism>
    <name type="scientific">Sphingopyxis alaskensis (strain DSM 13593 / LMG 18877 / RB2256)</name>
    <name type="common">Sphingomonas alaskensis</name>
    <dbReference type="NCBI Taxonomy" id="317655"/>
    <lineage>
        <taxon>Bacteria</taxon>
        <taxon>Pseudomonadati</taxon>
        <taxon>Pseudomonadota</taxon>
        <taxon>Alphaproteobacteria</taxon>
        <taxon>Sphingomonadales</taxon>
        <taxon>Sphingomonadaceae</taxon>
        <taxon>Sphingopyxis</taxon>
    </lineage>
</organism>
<name>RL20_SPHAL</name>
<reference key="1">
    <citation type="journal article" date="2009" name="Proc. Natl. Acad. Sci. U.S.A.">
        <title>The genomic basis of trophic strategy in marine bacteria.</title>
        <authorList>
            <person name="Lauro F.M."/>
            <person name="McDougald D."/>
            <person name="Thomas T."/>
            <person name="Williams T.J."/>
            <person name="Egan S."/>
            <person name="Rice S."/>
            <person name="DeMaere M.Z."/>
            <person name="Ting L."/>
            <person name="Ertan H."/>
            <person name="Johnson J."/>
            <person name="Ferriera S."/>
            <person name="Lapidus A."/>
            <person name="Anderson I."/>
            <person name="Kyrpides N."/>
            <person name="Munk A.C."/>
            <person name="Detter C."/>
            <person name="Han C.S."/>
            <person name="Brown M.V."/>
            <person name="Robb F.T."/>
            <person name="Kjelleberg S."/>
            <person name="Cavicchioli R."/>
        </authorList>
    </citation>
    <scope>NUCLEOTIDE SEQUENCE [LARGE SCALE GENOMIC DNA]</scope>
    <source>
        <strain>DSM 13593 / LMG 18877 / RB2256</strain>
    </source>
</reference>
<proteinExistence type="inferred from homology"/>
<comment type="function">
    <text evidence="1">Binds directly to 23S ribosomal RNA and is necessary for the in vitro assembly process of the 50S ribosomal subunit. It is not involved in the protein synthesizing functions of that subunit.</text>
</comment>
<comment type="similarity">
    <text evidence="1">Belongs to the bacterial ribosomal protein bL20 family.</text>
</comment>
<keyword id="KW-1185">Reference proteome</keyword>
<keyword id="KW-0687">Ribonucleoprotein</keyword>
<keyword id="KW-0689">Ribosomal protein</keyword>
<keyword id="KW-0694">RNA-binding</keyword>
<keyword id="KW-0699">rRNA-binding</keyword>